<accession>A7TJS7</accession>
<dbReference type="EC" id="3.6.4.13" evidence="1"/>
<dbReference type="EMBL" id="DS480403">
    <property type="protein sequence ID" value="EDO17506.1"/>
    <property type="molecule type" value="Genomic_DNA"/>
</dbReference>
<dbReference type="RefSeq" id="XP_001645364.1">
    <property type="nucleotide sequence ID" value="XM_001645314.1"/>
</dbReference>
<dbReference type="SMR" id="A7TJS7"/>
<dbReference type="FunCoup" id="A7TJS7">
    <property type="interactions" value="1256"/>
</dbReference>
<dbReference type="STRING" id="436907.A7TJS7"/>
<dbReference type="GeneID" id="5545725"/>
<dbReference type="KEGG" id="vpo:Kpol_1058p43"/>
<dbReference type="eggNOG" id="KOG0345">
    <property type="taxonomic scope" value="Eukaryota"/>
</dbReference>
<dbReference type="HOGENOM" id="CLU_003041_26_4_1"/>
<dbReference type="InParanoid" id="A7TJS7"/>
<dbReference type="OMA" id="AYKEHEC"/>
<dbReference type="OrthoDB" id="7396459at2759"/>
<dbReference type="PhylomeDB" id="A7TJS7"/>
<dbReference type="Proteomes" id="UP000000267">
    <property type="component" value="Unassembled WGS sequence"/>
</dbReference>
<dbReference type="GO" id="GO:0030686">
    <property type="term" value="C:90S preribosome"/>
    <property type="evidence" value="ECO:0007669"/>
    <property type="project" value="EnsemblFungi"/>
</dbReference>
<dbReference type="GO" id="GO:0005730">
    <property type="term" value="C:nucleolus"/>
    <property type="evidence" value="ECO:0007669"/>
    <property type="project" value="UniProtKB-SubCell"/>
</dbReference>
<dbReference type="GO" id="GO:0005654">
    <property type="term" value="C:nucleoplasm"/>
    <property type="evidence" value="ECO:0007669"/>
    <property type="project" value="EnsemblFungi"/>
</dbReference>
<dbReference type="GO" id="GO:0030687">
    <property type="term" value="C:preribosome, large subunit precursor"/>
    <property type="evidence" value="ECO:0007669"/>
    <property type="project" value="EnsemblFungi"/>
</dbReference>
<dbReference type="GO" id="GO:0005524">
    <property type="term" value="F:ATP binding"/>
    <property type="evidence" value="ECO:0007669"/>
    <property type="project" value="UniProtKB-KW"/>
</dbReference>
<dbReference type="GO" id="GO:0016887">
    <property type="term" value="F:ATP hydrolysis activity"/>
    <property type="evidence" value="ECO:0007669"/>
    <property type="project" value="RHEA"/>
</dbReference>
<dbReference type="GO" id="GO:0003723">
    <property type="term" value="F:RNA binding"/>
    <property type="evidence" value="ECO:0007669"/>
    <property type="project" value="UniProtKB-KW"/>
</dbReference>
<dbReference type="GO" id="GO:0003724">
    <property type="term" value="F:RNA helicase activity"/>
    <property type="evidence" value="ECO:0007669"/>
    <property type="project" value="UniProtKB-EC"/>
</dbReference>
<dbReference type="GO" id="GO:1902626">
    <property type="term" value="P:assembly of large subunit precursor of preribosome"/>
    <property type="evidence" value="ECO:0007669"/>
    <property type="project" value="EnsemblFungi"/>
</dbReference>
<dbReference type="GO" id="GO:0000470">
    <property type="term" value="P:maturation of LSU-rRNA"/>
    <property type="evidence" value="ECO:0007669"/>
    <property type="project" value="EnsemblFungi"/>
</dbReference>
<dbReference type="CDD" id="cd17960">
    <property type="entry name" value="DEADc_DDX55"/>
    <property type="match status" value="1"/>
</dbReference>
<dbReference type="CDD" id="cd18787">
    <property type="entry name" value="SF2_C_DEAD"/>
    <property type="match status" value="1"/>
</dbReference>
<dbReference type="Gene3D" id="3.40.50.300">
    <property type="entry name" value="P-loop containing nucleotide triphosphate hydrolases"/>
    <property type="match status" value="2"/>
</dbReference>
<dbReference type="InterPro" id="IPR056330">
    <property type="entry name" value="CTT_SPB4"/>
</dbReference>
<dbReference type="InterPro" id="IPR011545">
    <property type="entry name" value="DEAD/DEAH_box_helicase_dom"/>
</dbReference>
<dbReference type="InterPro" id="IPR014001">
    <property type="entry name" value="Helicase_ATP-bd"/>
</dbReference>
<dbReference type="InterPro" id="IPR001650">
    <property type="entry name" value="Helicase_C-like"/>
</dbReference>
<dbReference type="InterPro" id="IPR027417">
    <property type="entry name" value="P-loop_NTPase"/>
</dbReference>
<dbReference type="InterPro" id="IPR000629">
    <property type="entry name" value="RNA-helicase_DEAD-box_CS"/>
</dbReference>
<dbReference type="InterPro" id="IPR014014">
    <property type="entry name" value="RNA_helicase_DEAD_Q_motif"/>
</dbReference>
<dbReference type="InterPro" id="IPR025313">
    <property type="entry name" value="SPB4-like_CTE"/>
</dbReference>
<dbReference type="PANTHER" id="PTHR24031">
    <property type="entry name" value="RNA HELICASE"/>
    <property type="match status" value="1"/>
</dbReference>
<dbReference type="Pfam" id="PF13959">
    <property type="entry name" value="CTE_SPB4"/>
    <property type="match status" value="1"/>
</dbReference>
<dbReference type="Pfam" id="PF23681">
    <property type="entry name" value="CTT_SPB4"/>
    <property type="match status" value="1"/>
</dbReference>
<dbReference type="Pfam" id="PF00270">
    <property type="entry name" value="DEAD"/>
    <property type="match status" value="1"/>
</dbReference>
<dbReference type="Pfam" id="PF00271">
    <property type="entry name" value="Helicase_C"/>
    <property type="match status" value="1"/>
</dbReference>
<dbReference type="SMART" id="SM00487">
    <property type="entry name" value="DEXDc"/>
    <property type="match status" value="1"/>
</dbReference>
<dbReference type="SMART" id="SM01178">
    <property type="entry name" value="DUF4217"/>
    <property type="match status" value="1"/>
</dbReference>
<dbReference type="SMART" id="SM00490">
    <property type="entry name" value="HELICc"/>
    <property type="match status" value="1"/>
</dbReference>
<dbReference type="SUPFAM" id="SSF52540">
    <property type="entry name" value="P-loop containing nucleoside triphosphate hydrolases"/>
    <property type="match status" value="1"/>
</dbReference>
<dbReference type="PROSITE" id="PS00039">
    <property type="entry name" value="DEAD_ATP_HELICASE"/>
    <property type="match status" value="1"/>
</dbReference>
<dbReference type="PROSITE" id="PS51192">
    <property type="entry name" value="HELICASE_ATP_BIND_1"/>
    <property type="match status" value="1"/>
</dbReference>
<dbReference type="PROSITE" id="PS51194">
    <property type="entry name" value="HELICASE_CTER"/>
    <property type="match status" value="1"/>
</dbReference>
<dbReference type="PROSITE" id="PS51195">
    <property type="entry name" value="Q_MOTIF"/>
    <property type="match status" value="1"/>
</dbReference>
<gene>
    <name evidence="1" type="primary">SPB4</name>
    <name type="ORF">Kpol_1058p43</name>
</gene>
<protein>
    <recommendedName>
        <fullName evidence="6">ATP-dependent rRNA helicase SPB4</fullName>
        <ecNumber evidence="1">3.6.4.13</ecNumber>
    </recommendedName>
</protein>
<organism>
    <name type="scientific">Vanderwaltozyma polyspora (strain ATCC 22028 / DSM 70294 / BCRC 21397 / CBS 2163 / NBRC 10782 / NRRL Y-8283 / UCD 57-17)</name>
    <name type="common">Kluyveromyces polysporus</name>
    <dbReference type="NCBI Taxonomy" id="436907"/>
    <lineage>
        <taxon>Eukaryota</taxon>
        <taxon>Fungi</taxon>
        <taxon>Dikarya</taxon>
        <taxon>Ascomycota</taxon>
        <taxon>Saccharomycotina</taxon>
        <taxon>Saccharomycetes</taxon>
        <taxon>Saccharomycetales</taxon>
        <taxon>Saccharomycetaceae</taxon>
        <taxon>Vanderwaltozyma</taxon>
    </lineage>
</organism>
<proteinExistence type="inferred from homology"/>
<name>SPB4_VANPO</name>
<comment type="function">
    <text evidence="1">ATP-binding RNA helicase involved in the biogenesis of 60S ribosomal subunits. Binds 90S pre-ribosomal particles and dissociates from pre-60S ribosomal particles after processing of 27SB pre-rRNA. Required for the normal formation of 18S rRNA through the processing of pre-rRNAs at sites A0, A1 and A2, and the normal formation of 25S and 5.8S rRNAs through the processing of pre-rRNAs at sites C1 and C2.</text>
</comment>
<comment type="catalytic activity">
    <reaction evidence="1">
        <text>ATP + H2O = ADP + phosphate + H(+)</text>
        <dbReference type="Rhea" id="RHEA:13065"/>
        <dbReference type="ChEBI" id="CHEBI:15377"/>
        <dbReference type="ChEBI" id="CHEBI:15378"/>
        <dbReference type="ChEBI" id="CHEBI:30616"/>
        <dbReference type="ChEBI" id="CHEBI:43474"/>
        <dbReference type="ChEBI" id="CHEBI:456216"/>
        <dbReference type="EC" id="3.6.4.13"/>
    </reaction>
</comment>
<comment type="subunit">
    <text evidence="1">Component of pre-60S ribosomal complexes.</text>
</comment>
<comment type="subcellular location">
    <subcellularLocation>
        <location evidence="1">Nucleus</location>
        <location evidence="1">Nucleolus</location>
    </subcellularLocation>
</comment>
<comment type="domain">
    <text>The Q motif is unique to and characteristic of the DEAD box family of RNA helicases and controls ATP binding and hydrolysis.</text>
</comment>
<comment type="similarity">
    <text evidence="6">Belongs to the DEAD box helicase family. DDX55/SPB4 subfamily.</text>
</comment>
<reference key="1">
    <citation type="journal article" date="2007" name="Proc. Natl. Acad. Sci. U.S.A.">
        <title>Independent sorting-out of thousands of duplicated gene pairs in two yeast species descended from a whole-genome duplication.</title>
        <authorList>
            <person name="Scannell D.R."/>
            <person name="Frank A.C."/>
            <person name="Conant G.C."/>
            <person name="Byrne K.P."/>
            <person name="Woolfit M."/>
            <person name="Wolfe K.H."/>
        </authorList>
    </citation>
    <scope>NUCLEOTIDE SEQUENCE [LARGE SCALE GENOMIC DNA]</scope>
    <source>
        <strain>ATCC 22028 / DSM 70294 / BCRC 21397 / CBS 2163 / NBRC 10782 / NRRL Y-8283 / UCD 57-17</strain>
    </source>
</reference>
<feature type="chain" id="PRO_0000310252" description="ATP-dependent rRNA helicase SPB4">
    <location>
        <begin position="1"/>
        <end position="607"/>
    </location>
</feature>
<feature type="domain" description="Helicase ATP-binding" evidence="3">
    <location>
        <begin position="38"/>
        <end position="224"/>
    </location>
</feature>
<feature type="domain" description="Helicase C-terminal" evidence="4">
    <location>
        <begin position="248"/>
        <end position="404"/>
    </location>
</feature>
<feature type="region of interest" description="Disordered" evidence="5">
    <location>
        <begin position="527"/>
        <end position="607"/>
    </location>
</feature>
<feature type="coiled-coil region" evidence="2">
    <location>
        <begin position="529"/>
        <end position="565"/>
    </location>
</feature>
<feature type="short sequence motif" description="Q motif" evidence="6">
    <location>
        <begin position="7"/>
        <end position="35"/>
    </location>
</feature>
<feature type="short sequence motif" description="DEAD box" evidence="6">
    <location>
        <begin position="172"/>
        <end position="175"/>
    </location>
</feature>
<feature type="compositionally biased region" description="Basic and acidic residues" evidence="5">
    <location>
        <begin position="543"/>
        <end position="552"/>
    </location>
</feature>
<feature type="compositionally biased region" description="Basic and acidic residues" evidence="5">
    <location>
        <begin position="560"/>
        <end position="570"/>
    </location>
</feature>
<feature type="compositionally biased region" description="Polar residues" evidence="5">
    <location>
        <begin position="587"/>
        <end position="601"/>
    </location>
</feature>
<feature type="binding site" evidence="3">
    <location>
        <begin position="51"/>
        <end position="58"/>
    </location>
    <ligand>
        <name>ATP</name>
        <dbReference type="ChEBI" id="CHEBI:30616"/>
    </ligand>
</feature>
<evidence type="ECO:0000250" key="1">
    <source>
        <dbReference type="UniProtKB" id="P25808"/>
    </source>
</evidence>
<evidence type="ECO:0000255" key="2"/>
<evidence type="ECO:0000255" key="3">
    <source>
        <dbReference type="PROSITE-ProRule" id="PRU00541"/>
    </source>
</evidence>
<evidence type="ECO:0000255" key="4">
    <source>
        <dbReference type="PROSITE-ProRule" id="PRU00542"/>
    </source>
</evidence>
<evidence type="ECO:0000256" key="5">
    <source>
        <dbReference type="SAM" id="MobiDB-lite"/>
    </source>
</evidence>
<evidence type="ECO:0000305" key="6"/>
<keyword id="KW-0067">ATP-binding</keyword>
<keyword id="KW-0175">Coiled coil</keyword>
<keyword id="KW-0347">Helicase</keyword>
<keyword id="KW-0378">Hydrolase</keyword>
<keyword id="KW-0547">Nucleotide-binding</keyword>
<keyword id="KW-0539">Nucleus</keyword>
<keyword id="KW-1185">Reference proteome</keyword>
<keyword id="KW-0690">Ribosome biogenesis</keyword>
<keyword id="KW-0694">RNA-binding</keyword>
<keyword id="KW-0698">rRNA processing</keyword>
<sequence length="607" mass="69545">MSKSLLWDDLEYPIQPWIRSAVDVMGFENMTPVQAATIPLFARNKDVVVDSVTGSGKTVSFVIPIFEKIVQEEANTTKMKKGHFHSLIVSPTKELAKQIHSVFESFLEHYPENLYPIRSQLLVGTNVKTVRDDVSDFMENKPQILIGTPGRILDFLKIPSVKTSMCSMVILDEADRLLDVSFLKDMENIMNILPKQRRTGLFSATITSAGDNIFKTGLRNPVKVTVNSKSQAPSSLKIDCAVVETDKKLEQVISIINNYKFKKCIAYFPTCHSVTYFYSFMQYLLKKGIIKEEIQIYSLHGKLQTSARIKTLETFTETISNAVLLTTDVAARGIDIPDVDLVLQLDPPTDPEVFLHRCGRTGRANKLGKAITFLTPGREEDYIPFMEVKNINLEEISLDIVNLPDNFYEIFKDWLLEDRARLDQAVKSYVAYIKTYSKHAASSIFRLQSFDYVGLAKFYGLIRLPKMPEITKYFKEDKENARTFGEGWLIDPPINMDKFGYLDKKKEDRRLADLKNLKSIHDKKKLKSELKKKNMSWSNNTQSKEEKVERRTKMALKRKRIEEELSKEADENSSGDDEQNRDWKQVILQNKKSKNSNNGMQGSFDDL</sequence>